<keyword id="KW-0413">Isomerase</keyword>
<keyword id="KW-0456">Lyase</keyword>
<keyword id="KW-1185">Reference proteome</keyword>
<accession>Q9I489</accession>
<evidence type="ECO:0000250" key="1">
    <source>
        <dbReference type="UniProtKB" id="B9K4G4"/>
    </source>
</evidence>
<evidence type="ECO:0000269" key="2">
    <source>
    </source>
</evidence>
<evidence type="ECO:0000269" key="3">
    <source>
    </source>
</evidence>
<evidence type="ECO:0000269" key="4">
    <source>
    </source>
</evidence>
<evidence type="ECO:0000303" key="5">
    <source>
    </source>
</evidence>
<evidence type="ECO:0000305" key="6"/>
<evidence type="ECO:0000305" key="7">
    <source>
    </source>
</evidence>
<evidence type="ECO:0000312" key="8">
    <source>
        <dbReference type="EMBL" id="AAG04644.1"/>
    </source>
</evidence>
<reference key="1">
    <citation type="journal article" date="2000" name="Nature">
        <title>Complete genome sequence of Pseudomonas aeruginosa PAO1, an opportunistic pathogen.</title>
        <authorList>
            <person name="Stover C.K."/>
            <person name="Pham X.-Q.T."/>
            <person name="Erwin A.L."/>
            <person name="Mizoguchi S.D."/>
            <person name="Warrener P."/>
            <person name="Hickey M.J."/>
            <person name="Brinkman F.S.L."/>
            <person name="Hufnagle W.O."/>
            <person name="Kowalik D.J."/>
            <person name="Lagrou M."/>
            <person name="Garber R.L."/>
            <person name="Goltry L."/>
            <person name="Tolentino E."/>
            <person name="Westbrock-Wadman S."/>
            <person name="Yuan Y."/>
            <person name="Brody L.L."/>
            <person name="Coulter S.N."/>
            <person name="Folger K.R."/>
            <person name="Kas A."/>
            <person name="Larbig K."/>
            <person name="Lim R.M."/>
            <person name="Smith K.A."/>
            <person name="Spencer D.H."/>
            <person name="Wong G.K.-S."/>
            <person name="Wu Z."/>
            <person name="Paulsen I.T."/>
            <person name="Reizer J."/>
            <person name="Saier M.H. Jr."/>
            <person name="Hancock R.E.W."/>
            <person name="Lory S."/>
            <person name="Olson M.V."/>
        </authorList>
    </citation>
    <scope>NUCLEOTIDE SEQUENCE [LARGE SCALE GENOMIC DNA]</scope>
    <source>
        <strain>ATCC 15692 / DSM 22644 / CIP 104116 / JCM 14847 / LMG 12228 / 1C / PRS 101 / PAO1</strain>
    </source>
</reference>
<reference key="2">
    <citation type="journal article" date="2007" name="PLoS ONE">
        <title>Molecular and structural discrimination of proline racemase and hydroxyproline-2-epimerase from nosocomial and bacterial pathogens.</title>
        <authorList>
            <person name="Goytia M."/>
            <person name="Chamond N."/>
            <person name="Cosson A."/>
            <person name="Coatnoan N."/>
            <person name="Hermant D."/>
            <person name="Berneman A."/>
            <person name="Minoprio P."/>
        </authorList>
    </citation>
    <scope>LACK OF ENZYMATIC ACTIVITY AS PROLINE RACEMASE AND HYDROXYPROLINE-2-EPIMERASE FOR TRANS-4-HYDROXY-L-PROLINE</scope>
    <source>
        <strain>ATCC 15692 / DSM 22644 / CIP 104116 / JCM 14847 / LMG 12228 / 1C / PRS 101 / PAO1</strain>
    </source>
</reference>
<reference key="3">
    <citation type="journal article" date="2014" name="Elife">
        <title>Prediction and characterization of enzymatic activities guided by sequence similarity and genome neighborhood networks.</title>
        <authorList>
            <person name="Zhao S."/>
            <person name="Sakai A."/>
            <person name="Zhang X."/>
            <person name="Vetting M.W."/>
            <person name="Kumar R."/>
            <person name="Hillerich B."/>
            <person name="San Francisco B."/>
            <person name="Solbiati J."/>
            <person name="Steves A."/>
            <person name="Brown S."/>
            <person name="Akiva E."/>
            <person name="Barber A."/>
            <person name="Seidel R.D."/>
            <person name="Babbitt P.C."/>
            <person name="Almo S.C."/>
            <person name="Gerlt J.A."/>
            <person name="Jacobson M.P."/>
        </authorList>
    </citation>
    <scope>INDUCTION</scope>
    <source>
        <strain>ATCC 15692 / DSM 22644 / CIP 104116 / JCM 14847 / LMG 12228 / 1C / PRS 101 / PAO1</strain>
    </source>
</reference>
<reference key="4">
    <citation type="journal article" date="2016" name="Sci. Rep.">
        <title>Functional characterization of aconitase X as a cis-3-hydroxy-L-proline dehydratase.</title>
        <authorList>
            <person name="Watanabe S."/>
            <person name="Tajima K."/>
            <person name="Fujii S."/>
            <person name="Fukumori F."/>
            <person name="Hara R."/>
            <person name="Fukuda R."/>
            <person name="Miyazaki M."/>
            <person name="Kino K."/>
            <person name="Watanabe Y."/>
        </authorList>
    </citation>
    <scope>FUNCTION</scope>
    <scope>CATALYTIC ACTIVITY</scope>
    <scope>BIOPHYSICOCHEMICAL PROPERTIES</scope>
    <source>
        <strain evidence="5">ATCC 15692 / DSM 22644 / CIP 104116 / JCM 14847 / LMG 12228 / 1C / PRS 101 / PAO1</strain>
    </source>
</reference>
<protein>
    <recommendedName>
        <fullName evidence="5">Bifunctional trans-3-hydroxy-L-proline dehydratase/2-epimerase</fullName>
        <shortName evidence="6">Bifunctional t3LHyp dehydratase/2-epimerase</shortName>
    </recommendedName>
    <alternativeName>
        <fullName evidence="5">PaLhpL</fullName>
    </alternativeName>
    <alternativeName>
        <fullName evidence="5">Trans-3-hydroxy-L-proline 2-epimerase</fullName>
        <shortName evidence="6">T3LHyp 2-epimerase</shortName>
        <shortName evidence="6">t3LHypE</shortName>
        <ecNumber evidence="4">5.1.1.-</ecNumber>
    </alternativeName>
    <alternativeName>
        <fullName evidence="5">Trans-3-hydroxy-L-proline dehydratase</fullName>
        <shortName>T3LHyp dehydratase</shortName>
        <shortName>t3HypD</shortName>
        <ecNumber evidence="4 7">4.2.1.77</ecNumber>
    </alternativeName>
    <alternativeName>
        <fullName>Trans-L-3-hydroxyproline dehydratase</fullName>
    </alternativeName>
</protein>
<dbReference type="EC" id="5.1.1.-" evidence="4"/>
<dbReference type="EC" id="4.2.1.77" evidence="4 7"/>
<dbReference type="EMBL" id="AE004091">
    <property type="protein sequence ID" value="AAG04644.1"/>
    <property type="molecule type" value="Genomic_DNA"/>
</dbReference>
<dbReference type="PIR" id="E83488">
    <property type="entry name" value="E83488"/>
</dbReference>
<dbReference type="RefSeq" id="NP_249946.1">
    <property type="nucleotide sequence ID" value="NC_002516.2"/>
</dbReference>
<dbReference type="RefSeq" id="WP_003114965.1">
    <property type="nucleotide sequence ID" value="NZ_QZGE01000005.1"/>
</dbReference>
<dbReference type="SMR" id="Q9I489"/>
<dbReference type="STRING" id="208964.PA1255"/>
<dbReference type="PaxDb" id="208964-PA1255"/>
<dbReference type="DNASU" id="881287"/>
<dbReference type="GeneID" id="881287"/>
<dbReference type="KEGG" id="pae:PA1255"/>
<dbReference type="PATRIC" id="fig|208964.12.peg.1303"/>
<dbReference type="PseudoCAP" id="PA1255"/>
<dbReference type="HOGENOM" id="CLU_036729_2_0_6"/>
<dbReference type="InParanoid" id="Q9I489"/>
<dbReference type="OrthoDB" id="181267at2"/>
<dbReference type="PhylomeDB" id="Q9I489"/>
<dbReference type="BioCyc" id="PAER208964:G1FZ6-1280-MONOMER"/>
<dbReference type="Proteomes" id="UP000002438">
    <property type="component" value="Chromosome"/>
</dbReference>
<dbReference type="GO" id="GO:0047580">
    <property type="term" value="F:4-hydroxyproline epimerase activity"/>
    <property type="evidence" value="ECO:0000315"/>
    <property type="project" value="PseudoCAP"/>
</dbReference>
<dbReference type="GO" id="GO:0050346">
    <property type="term" value="F:trans-L-3-hydroxyproline dehydratase activity"/>
    <property type="evidence" value="ECO:0007669"/>
    <property type="project" value="UniProtKB-EC"/>
</dbReference>
<dbReference type="FunFam" id="3.10.310.10:FF:000005">
    <property type="entry name" value="Proline racemase"/>
    <property type="match status" value="1"/>
</dbReference>
<dbReference type="Gene3D" id="3.10.310.10">
    <property type="entry name" value="Diaminopimelate Epimerase, Chain A, domain 1"/>
    <property type="match status" value="2"/>
</dbReference>
<dbReference type="InterPro" id="IPR008794">
    <property type="entry name" value="Pro_racemase_fam"/>
</dbReference>
<dbReference type="NCBIfam" id="NF047722">
    <property type="entry name" value="T3LHypDht"/>
    <property type="match status" value="1"/>
</dbReference>
<dbReference type="PANTHER" id="PTHR33442:SF5">
    <property type="entry name" value="BIFUNCTIONAL TRANS-3-HYDROXY-L-PROLINE DEHYDRATASE_2-EPIMERASE"/>
    <property type="match status" value="1"/>
</dbReference>
<dbReference type="PANTHER" id="PTHR33442">
    <property type="entry name" value="TRANS-3-HYDROXY-L-PROLINE DEHYDRATASE"/>
    <property type="match status" value="1"/>
</dbReference>
<dbReference type="Pfam" id="PF05544">
    <property type="entry name" value="Pro_racemase"/>
    <property type="match status" value="1"/>
</dbReference>
<dbReference type="PIRSF" id="PIRSF029792">
    <property type="entry name" value="Pro_racemase"/>
    <property type="match status" value="1"/>
</dbReference>
<dbReference type="SFLD" id="SFLDS00028">
    <property type="entry name" value="Proline_Racemase"/>
    <property type="match status" value="1"/>
</dbReference>
<dbReference type="SUPFAM" id="SSF54506">
    <property type="entry name" value="Diaminopimelate epimerase-like"/>
    <property type="match status" value="1"/>
</dbReference>
<proteinExistence type="evidence at protein level"/>
<gene>
    <name evidence="5" type="primary">lhpL</name>
    <name evidence="5 8" type="ordered locus">PA1255</name>
</gene>
<sequence length="344" mass="37344">MRSQRIVHIVSCHAEGEVGDVIVGGVAAPPGATLWEQSRWIARDQDLRNFVLNEPRGGVFRHANLLVPAKDPRAQMGWIIMEPADTPPMSGSNSLCVATVLLDSGILPMREPLTRLLLEAPGGLIEARAECRDGKAERVEIRNVPSFADRLDAWIEVEGLGSLQVDTAYGGDSFVIADARRLGFALRADEAAELVATGLKITHAANEQLGFRHPTNPDWDHLSFCQLAAPPERRDGVLGANNAVVIRPGKIDRSPCGTGCSARMAVLQAKGQLRVGERFVGRSIIGSEFHCHIESLTELGGRPAILPCLSGRAWITGIHQYLLDPDDPWPQGYRLSDTWPGGHC</sequence>
<comment type="function">
    <text evidence="2 4 7">Bifunctional enzyme catalyzing both the dehydration of trans-3-hydroxy-L-proline (t3LHyp) to Delta(1)-pyrroline-2-carboxylate (Pyr2C) and 2-epimerization of t3LHyp to cis-3-hydroxy-D-proline (c3DHyp). No dehydratase activity with L-proline, trans-4-hydroxy-L-proline (t4LHyp), cis-4-hydroxy-L-proline (c4LHyp), D-proline, cis-4-hydroxy-D-proline (c4DHyp), trans-4-hydroxy-D-proline (t4DHyp) or L-serine as substrates (PubMed:27929065). Displays neither t4LHyp epimerase nor proline racemase activity (PubMed:17849014). Is likely involved in a degradation pathway that converts t3LHyp to L-proline, which would allow P.aeruginosa to grow on t3LHyp as a sole carbon source (PubMed:24980702, PubMed:27929065).</text>
</comment>
<comment type="catalytic activity">
    <reaction evidence="4 7">
        <text>trans-3-hydroxy-L-proline = 1-pyrroline-2-carboxylate + H2O</text>
        <dbReference type="Rhea" id="RHEA:10320"/>
        <dbReference type="ChEBI" id="CHEBI:15377"/>
        <dbReference type="ChEBI" id="CHEBI:39785"/>
        <dbReference type="ChEBI" id="CHEBI:57938"/>
        <dbReference type="EC" id="4.2.1.77"/>
    </reaction>
</comment>
<comment type="catalytic activity">
    <reaction evidence="4">
        <text>trans-3-hydroxy-L-proline = cis-3-hydroxy-D-proline</text>
        <dbReference type="Rhea" id="RHEA:47712"/>
        <dbReference type="ChEBI" id="CHEBI:57938"/>
        <dbReference type="ChEBI" id="CHEBI:87840"/>
    </reaction>
</comment>
<comment type="biophysicochemical properties">
    <kinetics>
        <KM evidence="4">23 mM for the dehydration of trans-3-hydroxy-L-proline</KM>
        <Vmax evidence="4">0.229 umol/min/mg enzyme</Vmax>
        <text evidence="4">kcat is 28.7 min(-1). kcat/KM is 1.23 min(-1) mM(-1).</text>
    </kinetics>
</comment>
<comment type="induction">
    <text evidence="3">Is up-regulated when the bacterium is grown on trans-4-hydroxy-L-proline (t4LHyp) or trans-3-hydroxy-L-proline (t3LHyp) as sole carbon source.</text>
</comment>
<comment type="similarity">
    <text evidence="6">Belongs to the proline racemase family.</text>
</comment>
<feature type="chain" id="PRO_0000354047" description="Bifunctional trans-3-hydroxy-L-proline dehydratase/2-epimerase">
    <location>
        <begin position="1"/>
        <end position="344"/>
    </location>
</feature>
<feature type="active site" description="Proton acceptor" evidence="1">
    <location>
        <position position="90"/>
    </location>
</feature>
<feature type="binding site" evidence="1">
    <location>
        <begin position="91"/>
        <end position="92"/>
    </location>
    <ligand>
        <name>substrate</name>
    </ligand>
</feature>
<feature type="binding site" evidence="1">
    <location>
        <position position="252"/>
    </location>
    <ligand>
        <name>substrate</name>
    </ligand>
</feature>
<feature type="binding site" evidence="1">
    <location>
        <begin position="257"/>
        <end position="258"/>
    </location>
    <ligand>
        <name>substrate</name>
    </ligand>
</feature>
<organism>
    <name type="scientific">Pseudomonas aeruginosa (strain ATCC 15692 / DSM 22644 / CIP 104116 / JCM 14847 / LMG 12228 / 1C / PRS 101 / PAO1)</name>
    <dbReference type="NCBI Taxonomy" id="208964"/>
    <lineage>
        <taxon>Bacteria</taxon>
        <taxon>Pseudomonadati</taxon>
        <taxon>Pseudomonadota</taxon>
        <taxon>Gammaproteobacteria</taxon>
        <taxon>Pseudomonadales</taxon>
        <taxon>Pseudomonadaceae</taxon>
        <taxon>Pseudomonas</taxon>
    </lineage>
</organism>
<name>T3HPD_PSEAE</name>